<evidence type="ECO:0000250" key="1">
    <source>
        <dbReference type="UniProtKB" id="A0A5B8NBK9"/>
    </source>
</evidence>
<evidence type="ECO:0000250" key="2">
    <source>
        <dbReference type="UniProtKB" id="Q96242"/>
    </source>
</evidence>
<evidence type="ECO:0000255" key="3"/>
<evidence type="ECO:0000303" key="4">
    <source>
    </source>
</evidence>
<evidence type="ECO:0000303" key="5">
    <source ref="2"/>
</evidence>
<evidence type="ECO:0000305" key="6"/>
<evidence type="ECO:0000312" key="7">
    <source>
        <dbReference type="EMBL" id="QDZ36318.1"/>
    </source>
</evidence>
<evidence type="ECO:0000312" key="8">
    <source>
        <dbReference type="EMBL" id="QNN89105.1"/>
    </source>
</evidence>
<dbReference type="EC" id="1.14.14.-" evidence="1"/>
<dbReference type="EMBL" id="MK803275">
    <property type="protein sequence ID" value="QDZ36318.1"/>
    <property type="molecule type" value="mRNA"/>
</dbReference>
<dbReference type="EMBL" id="MN747929">
    <property type="protein sequence ID" value="QNN89105.1"/>
    <property type="molecule type" value="mRNA"/>
</dbReference>
<dbReference type="SMR" id="A0A5B8ND26"/>
<dbReference type="UniPathway" id="UPA00213"/>
<dbReference type="GO" id="GO:0016020">
    <property type="term" value="C:membrane"/>
    <property type="evidence" value="ECO:0007669"/>
    <property type="project" value="UniProtKB-SubCell"/>
</dbReference>
<dbReference type="GO" id="GO:0020037">
    <property type="term" value="F:heme binding"/>
    <property type="evidence" value="ECO:0007669"/>
    <property type="project" value="InterPro"/>
</dbReference>
<dbReference type="GO" id="GO:0005506">
    <property type="term" value="F:iron ion binding"/>
    <property type="evidence" value="ECO:0007669"/>
    <property type="project" value="InterPro"/>
</dbReference>
<dbReference type="GO" id="GO:0004497">
    <property type="term" value="F:monooxygenase activity"/>
    <property type="evidence" value="ECO:0007669"/>
    <property type="project" value="UniProtKB-KW"/>
</dbReference>
<dbReference type="GO" id="GO:0016705">
    <property type="term" value="F:oxidoreductase activity, acting on paired donors, with incorporation or reduction of molecular oxygen"/>
    <property type="evidence" value="ECO:0007669"/>
    <property type="project" value="InterPro"/>
</dbReference>
<dbReference type="CDD" id="cd11072">
    <property type="entry name" value="CYP71-like"/>
    <property type="match status" value="1"/>
</dbReference>
<dbReference type="FunFam" id="1.10.630.10:FF:000043">
    <property type="entry name" value="Cytochrome P450 99A2"/>
    <property type="match status" value="1"/>
</dbReference>
<dbReference type="Gene3D" id="1.10.630.10">
    <property type="entry name" value="Cytochrome P450"/>
    <property type="match status" value="1"/>
</dbReference>
<dbReference type="InterPro" id="IPR001128">
    <property type="entry name" value="Cyt_P450"/>
</dbReference>
<dbReference type="InterPro" id="IPR017972">
    <property type="entry name" value="Cyt_P450_CS"/>
</dbReference>
<dbReference type="InterPro" id="IPR002401">
    <property type="entry name" value="Cyt_P450_E_grp-I"/>
</dbReference>
<dbReference type="InterPro" id="IPR036396">
    <property type="entry name" value="Cyt_P450_sf"/>
</dbReference>
<dbReference type="PANTHER" id="PTHR47955">
    <property type="entry name" value="CYTOCHROME P450 FAMILY 71 PROTEIN"/>
    <property type="match status" value="1"/>
</dbReference>
<dbReference type="PANTHER" id="PTHR47955:SF9">
    <property type="entry name" value="PREMNASPIRODIENE OXYGENASE-LIKE"/>
    <property type="match status" value="1"/>
</dbReference>
<dbReference type="Pfam" id="PF00067">
    <property type="entry name" value="p450"/>
    <property type="match status" value="1"/>
</dbReference>
<dbReference type="PRINTS" id="PR00463">
    <property type="entry name" value="EP450I"/>
</dbReference>
<dbReference type="PRINTS" id="PR00385">
    <property type="entry name" value="P450"/>
</dbReference>
<dbReference type="SUPFAM" id="SSF48264">
    <property type="entry name" value="Cytochrome P450"/>
    <property type="match status" value="1"/>
</dbReference>
<dbReference type="PROSITE" id="PS00086">
    <property type="entry name" value="CYTOCHROME_P450"/>
    <property type="match status" value="1"/>
</dbReference>
<proteinExistence type="evidence at transcript level"/>
<organism>
    <name type="scientific">Azadirachta indica</name>
    <name type="common">Neem tree</name>
    <name type="synonym">Melia azadirachta</name>
    <dbReference type="NCBI Taxonomy" id="124943"/>
    <lineage>
        <taxon>Eukaryota</taxon>
        <taxon>Viridiplantae</taxon>
        <taxon>Streptophyta</taxon>
        <taxon>Embryophyta</taxon>
        <taxon>Tracheophyta</taxon>
        <taxon>Spermatophyta</taxon>
        <taxon>Magnoliopsida</taxon>
        <taxon>eudicotyledons</taxon>
        <taxon>Gunneridae</taxon>
        <taxon>Pentapetalae</taxon>
        <taxon>rosids</taxon>
        <taxon>malvids</taxon>
        <taxon>Sapindales</taxon>
        <taxon>Meliaceae</taxon>
        <taxon>Azadirachta</taxon>
    </lineage>
</organism>
<reference evidence="7" key="1">
    <citation type="journal article" date="2019" name="Proc. Natl. Acad. Sci. U.S.A.">
        <title>Identification of key enzymes responsible for protolimonoid biosynthesis in plants: Opening the door to azadirachtin production.</title>
        <authorList>
            <person name="Hodgson H."/>
            <person name="De La Pena R."/>
            <person name="Stephenson M.J."/>
            <person name="Thimmappa R."/>
            <person name="Vincent J.L."/>
            <person name="Sattely E.S."/>
            <person name="Osbourn A."/>
        </authorList>
    </citation>
    <scope>NUCLEOTIDE SEQUENCE [MRNA]</scope>
</reference>
<reference evidence="8" key="2">
    <citation type="submission" date="2019-11" db="EMBL/GenBank/DDBJ databases">
        <title>Systematic dissection of limonoid biosynthesis in neem: identification and functional characterization of key enzymes involved in limonoid biosynthetic pathway.</title>
        <authorList>
            <person name="Pandreka A."/>
            <person name="Kumar A."/>
            <person name="Thulasiram H.V."/>
        </authorList>
    </citation>
    <scope>NUCLEOTIDE SEQUENCE [MRNA] OF 217-512</scope>
</reference>
<protein>
    <recommendedName>
        <fullName evidence="4">Dihydroniloticin synthase CYP71CD2</fullName>
        <ecNumber evidence="1">1.14.14.-</ecNumber>
    </recommendedName>
    <alternativeName>
        <fullName evidence="4">Cytochrome P450 family 71 subfamily CD polypeptide 2</fullName>
        <shortName evidence="5">AiCYP13</shortName>
        <shortName evidence="4">AiCYP71CD2</shortName>
    </alternativeName>
</protein>
<keyword id="KW-0349">Heme</keyword>
<keyword id="KW-0408">Iron</keyword>
<keyword id="KW-0472">Membrane</keyword>
<keyword id="KW-0479">Metal-binding</keyword>
<keyword id="KW-0503">Monooxygenase</keyword>
<keyword id="KW-0560">Oxidoreductase</keyword>
<keyword id="KW-0812">Transmembrane</keyword>
<keyword id="KW-1133">Transmembrane helix</keyword>
<gene>
    <name evidence="4" type="primary">CYP71CD2</name>
    <name evidence="5" type="synonym">CYP13</name>
</gene>
<sequence length="512" mass="58125">MNLQLDYFSITSFLVFLVVLFRIVSDWKKKSTNLRLPPGPSKLPIIGSVHHLIGMDVDLPYHAFADLAKKYGPLMHLQLGQMSLVVASSAKMFKELMKENDLAISQRPVPYVARVLNDAGRDIAFVPYGDYWRQIRKISRMELFSVRKVQSLYYIREDQSNKMIDAIRGSSETVMNLSKAVSDYTSTVVARAAFGSGCKDQDKFIKLSLEMVAAAGAVSTLPDMFPALGFIPILSGKKAFLQNIQKEADKILDYIIDEHIQRTKSKDYDGKESDKEDIVDVLLRLEKTGELEIPITTQDIKAVIWSVFAGGTDTSSTTTLWAMSELMRNPKVMEKVQAEVREKLKGKKEILEADIQDLPYMRAVIKETLRLRIPGPLLLPRETMEPIEVDGYVIPEKTKILFNAWAVTRDPELWENPESFIPERFIEKQIDFKGTNYEFTPFGSGRRICPGMNFGIANVELPLAKLLYYFNWQLPHGMKPEDLDMTAKFGVVCGRKNDLFLIPTPYNIEGQN</sequence>
<feature type="chain" id="PRO_0000461365" description="Dihydroniloticin synthase CYP71CD2">
    <location>
        <begin position="1"/>
        <end position="512"/>
    </location>
</feature>
<feature type="transmembrane region" description="Helical" evidence="3">
    <location>
        <begin position="1"/>
        <end position="21"/>
    </location>
</feature>
<feature type="binding site" description="axial binding residue" evidence="2">
    <location>
        <position position="449"/>
    </location>
    <ligand>
        <name>heme</name>
        <dbReference type="ChEBI" id="CHEBI:30413"/>
    </ligand>
    <ligandPart>
        <name>Fe</name>
        <dbReference type="ChEBI" id="CHEBI:18248"/>
    </ligandPart>
</feature>
<accession>A0A5B8ND26</accession>
<accession>A0A7G9U7M4</accession>
<comment type="function">
    <text evidence="1">Monooxygenase involved in the biosynthesis of limonoids triterpene natural products such as azadirachtin, an antifeedant widely used as bioinsecticide, and possessing many medicinal applications including anti-tumoral, anti-malarial, anti-rheumatic, antibacterial, anti-inflammatory, anti-pyretic and diuretic effects (By similarity). Catalyzes the conversion of tirucalladienol to dihydroniloticin (By similarity).</text>
</comment>
<comment type="catalytic activity">
    <reaction evidence="1">
        <text>tirucalla-7,24-dien-3beta-ol + 2 reduced [NADPH--hemoprotein reductase] + 2 O2 = dihydroniloticin + 2 oxidized [NADPH--hemoprotein reductase] + 2 H2O + 2 H(+)</text>
        <dbReference type="Rhea" id="RHEA:80279"/>
        <dbReference type="Rhea" id="RHEA-COMP:11964"/>
        <dbReference type="Rhea" id="RHEA-COMP:11965"/>
        <dbReference type="ChEBI" id="CHEBI:15377"/>
        <dbReference type="ChEBI" id="CHEBI:15378"/>
        <dbReference type="ChEBI" id="CHEBI:15379"/>
        <dbReference type="ChEBI" id="CHEBI:57618"/>
        <dbReference type="ChEBI" id="CHEBI:58210"/>
        <dbReference type="ChEBI" id="CHEBI:63468"/>
        <dbReference type="ChEBI" id="CHEBI:231450"/>
    </reaction>
    <physiologicalReaction direction="left-to-right" evidence="1">
        <dbReference type="Rhea" id="RHEA:80280"/>
    </physiologicalReaction>
</comment>
<comment type="cofactor">
    <cofactor evidence="2">
        <name>heme</name>
        <dbReference type="ChEBI" id="CHEBI:30413"/>
    </cofactor>
</comment>
<comment type="pathway">
    <text evidence="1">Secondary metabolite biosynthesis; terpenoid biosynthesis.</text>
</comment>
<comment type="subcellular location">
    <subcellularLocation>
        <location evidence="3">Membrane</location>
        <topology evidence="3">Single-pass membrane protein</topology>
    </subcellularLocation>
</comment>
<comment type="similarity">
    <text evidence="6">Belongs to the cytochrome P450 family.</text>
</comment>
<name>C1CD2_AZAIN</name>